<feature type="signal peptide">
    <location>
        <begin position="1"/>
        <end position="16"/>
    </location>
</feature>
<feature type="chain" id="PRO_0000013329" description="Arylphorin subunit alpha">
    <location>
        <begin position="17"/>
        <end position="702"/>
    </location>
</feature>
<feature type="glycosylation site" description="N-linked (GlcNAc...) asparagine" evidence="1">
    <location>
        <position position="75"/>
    </location>
</feature>
<feature type="glycosylation site" description="N-linked (GlcNAc...) asparagine" evidence="1">
    <location>
        <position position="214"/>
    </location>
</feature>
<proteinExistence type="evidence at transcript level"/>
<name>ARYA_MANSE</name>
<evidence type="ECO:0000255" key="1"/>
<evidence type="ECO:0000305" key="2"/>
<keyword id="KW-0325">Glycoprotein</keyword>
<keyword id="KW-0964">Secreted</keyword>
<keyword id="KW-0732">Signal</keyword>
<keyword id="KW-0758">Storage protein</keyword>
<organism>
    <name type="scientific">Manduca sexta</name>
    <name type="common">Tobacco hawkmoth</name>
    <name type="synonym">Tobacco hornworm</name>
    <dbReference type="NCBI Taxonomy" id="7130"/>
    <lineage>
        <taxon>Eukaryota</taxon>
        <taxon>Metazoa</taxon>
        <taxon>Ecdysozoa</taxon>
        <taxon>Arthropoda</taxon>
        <taxon>Hexapoda</taxon>
        <taxon>Insecta</taxon>
        <taxon>Pterygota</taxon>
        <taxon>Neoptera</taxon>
        <taxon>Endopterygota</taxon>
        <taxon>Lepidoptera</taxon>
        <taxon>Glossata</taxon>
        <taxon>Ditrysia</taxon>
        <taxon>Bombycoidea</taxon>
        <taxon>Sphingidae</taxon>
        <taxon>Sphinginae</taxon>
        <taxon>Sphingini</taxon>
        <taxon>Manduca</taxon>
    </lineage>
</organism>
<protein>
    <recommendedName>
        <fullName>Arylphorin subunit alpha</fullName>
    </recommendedName>
</protein>
<sequence>MKTVVILAGLVALALSSAVPPPKYQHHYKTSPVDAIFVEKQKKVFSLFKNVNQLDYEAEYYKIGKDYDVEANIDNYSNKKVVEDFLLLYRTGFMPKGFEFSIFYERMREEAIALFELFYYAKDFETFYKTASFARVHVNEGMFLYAYYIAVIQRMDTNGLVLPAPYEVYPQYFTNMEVLFKVDRIKMQDGFLNKDLAAYYGMYHENDNYVFYANYSNSLSYPNEEERIAYFYEDIGLNSYYYYFHMHLPFWWNSEKYGPFKERRGEIYYYFYQQLIARYYLERLTNGLGEIPEFSWYSPVKTGYYPMLYGSYYPFAQRPNYYDIHNDKNYEQIRFLDMFEMTFLQYLQKGHFKAFDKEINFHDVKAVNFVGNYWQANADLYNEEVTKLYQRSYEINARHVLGAAPKPFNKYSFIPSALDFYQTSLRDPVFYQLYDRIINYINEFKQYLQPYNQNDLHFVGVKISDVKVDKLATYFEYYDFDVSNSVFVSKKDIKNFPYGYKVRQPRLNHKPFSVSIGVKSDVAVDAVFKIFLGPKYDSNGFPIPLAKNWNKFYELDWFVHKVMPGQNHIVRQSSDFLFFKEDSLPMSEIYKLLDEGKIPSDMSNSSDTLPQRLMLPRGTKDGYPFQLFVFVYPYQAVPKEMEPFKSIVPDSKPFGYPFDRPVHPEYFKQPNMHFEDVHVYHEGEQFPYKFNVPFYVPQKVEV</sequence>
<comment type="function">
    <text>Arylphorin is a larval storage protein (LSP) which may serve as a storage protein used primarily as a source of aromatic amino acids for protein synthesis during metamorphosis. It is a constituent of the sclerotizing system of the cuticle, and serves as a carrier for ecdysteroid hormone.</text>
</comment>
<comment type="subunit">
    <text>Arylphorin is a hexamer of subunits alpha and beta.</text>
</comment>
<comment type="subcellular location">
    <subcellularLocation>
        <location>Secreted</location>
        <location>Extracellular space</location>
    </subcellularLocation>
</comment>
<comment type="tissue specificity">
    <text>Fat body.</text>
</comment>
<comment type="similarity">
    <text evidence="2">Belongs to the hemocyanin family.</text>
</comment>
<dbReference type="EMBL" id="M28394">
    <property type="protein sequence ID" value="AAA29302.1"/>
    <property type="molecule type" value="Genomic_DNA"/>
</dbReference>
<dbReference type="EMBL" id="M28396">
    <property type="protein sequence ID" value="AAA29303.1"/>
    <property type="molecule type" value="mRNA"/>
</dbReference>
<dbReference type="PIR" id="A34434">
    <property type="entry name" value="A34434"/>
</dbReference>
<dbReference type="RefSeq" id="XP_030040408.1">
    <property type="nucleotide sequence ID" value="XM_030184548.2"/>
</dbReference>
<dbReference type="SMR" id="P14296"/>
<dbReference type="EnsemblMetazoa" id="XM_030184548.2">
    <property type="protein sequence ID" value="XP_030040408.1"/>
    <property type="gene ID" value="LOC115455814"/>
</dbReference>
<dbReference type="GeneID" id="115455814"/>
<dbReference type="OrthoDB" id="6371642at2759"/>
<dbReference type="GO" id="GO:0005576">
    <property type="term" value="C:extracellular region"/>
    <property type="evidence" value="ECO:0007669"/>
    <property type="project" value="UniProtKB-SubCell"/>
</dbReference>
<dbReference type="GO" id="GO:0045735">
    <property type="term" value="F:nutrient reservoir activity"/>
    <property type="evidence" value="ECO:0007669"/>
    <property type="project" value="UniProtKB-KW"/>
</dbReference>
<dbReference type="Gene3D" id="1.10.1280.10">
    <property type="entry name" value="Di-copper center containing domain from catechol oxidase"/>
    <property type="match status" value="1"/>
</dbReference>
<dbReference type="Gene3D" id="2.60.40.1520">
    <property type="entry name" value="Hemocyanin, C-terminal domain"/>
    <property type="match status" value="1"/>
</dbReference>
<dbReference type="Gene3D" id="1.20.1370.10">
    <property type="entry name" value="Hemocyanin, N-terminal domain"/>
    <property type="match status" value="1"/>
</dbReference>
<dbReference type="InterPro" id="IPR008922">
    <property type="entry name" value="Di-copper_centre_dom_sf"/>
</dbReference>
<dbReference type="InterPro" id="IPR013788">
    <property type="entry name" value="Hemocyanin/hexamerin"/>
</dbReference>
<dbReference type="InterPro" id="IPR000896">
    <property type="entry name" value="Hemocyanin/hexamerin_mid_dom"/>
</dbReference>
<dbReference type="InterPro" id="IPR005203">
    <property type="entry name" value="Hemocyanin_C"/>
</dbReference>
<dbReference type="InterPro" id="IPR037020">
    <property type="entry name" value="Hemocyanin_C_sf"/>
</dbReference>
<dbReference type="InterPro" id="IPR005204">
    <property type="entry name" value="Hemocyanin_N"/>
</dbReference>
<dbReference type="InterPro" id="IPR036697">
    <property type="entry name" value="Hemocyanin_N_sf"/>
</dbReference>
<dbReference type="InterPro" id="IPR014756">
    <property type="entry name" value="Ig_E-set"/>
</dbReference>
<dbReference type="PANTHER" id="PTHR11511:SF5">
    <property type="entry name" value="FAT-BODY PROTEIN 1-RELATED"/>
    <property type="match status" value="1"/>
</dbReference>
<dbReference type="PANTHER" id="PTHR11511">
    <property type="entry name" value="LARVAL STORAGE PROTEIN/PHENOLOXIDASE"/>
    <property type="match status" value="1"/>
</dbReference>
<dbReference type="Pfam" id="PF03723">
    <property type="entry name" value="Hemocyanin_C"/>
    <property type="match status" value="1"/>
</dbReference>
<dbReference type="Pfam" id="PF00372">
    <property type="entry name" value="Hemocyanin_M"/>
    <property type="match status" value="1"/>
</dbReference>
<dbReference type="Pfam" id="PF03722">
    <property type="entry name" value="Hemocyanin_N"/>
    <property type="match status" value="1"/>
</dbReference>
<dbReference type="PRINTS" id="PR00187">
    <property type="entry name" value="HAEMOCYANIN"/>
</dbReference>
<dbReference type="SUPFAM" id="SSF48056">
    <property type="entry name" value="Di-copper centre-containing domain"/>
    <property type="match status" value="1"/>
</dbReference>
<dbReference type="SUPFAM" id="SSF81296">
    <property type="entry name" value="E set domains"/>
    <property type="match status" value="1"/>
</dbReference>
<dbReference type="SUPFAM" id="SSF48050">
    <property type="entry name" value="Hemocyanin, N-terminal domain"/>
    <property type="match status" value="1"/>
</dbReference>
<dbReference type="PROSITE" id="PS00209">
    <property type="entry name" value="HEMOCYANIN_1"/>
    <property type="match status" value="1"/>
</dbReference>
<dbReference type="PROSITE" id="PS00210">
    <property type="entry name" value="HEMOCYANIN_2"/>
    <property type="match status" value="1"/>
</dbReference>
<accession>P14296</accession>
<reference key="1">
    <citation type="journal article" date="1989" name="J. Biol. Chem.">
        <title>cDNA and gene sequence of Manduca sexta arylphorin, an aromatic amino acid-rich larval serum protein. Homology to arthropod hemocyanins.</title>
        <authorList>
            <person name="Willott E."/>
            <person name="Wang X.-Y."/>
            <person name="Wells M.A."/>
        </authorList>
    </citation>
    <scope>NUCLEOTIDE SEQUENCE [GENOMIC DNA / MRNA]</scope>
    <source>
        <tissue>Larval fat body</tissue>
    </source>
</reference>